<organism>
    <name type="scientific">Streptococcus pneumoniae serotype 2 (strain D39 / NCTC 7466)</name>
    <dbReference type="NCBI Taxonomy" id="373153"/>
    <lineage>
        <taxon>Bacteria</taxon>
        <taxon>Bacillati</taxon>
        <taxon>Bacillota</taxon>
        <taxon>Bacilli</taxon>
        <taxon>Lactobacillales</taxon>
        <taxon>Streptococcaceae</taxon>
        <taxon>Streptococcus</taxon>
    </lineage>
</organism>
<sequence>MKSIIDVKNLSFRYKENQNYYDVKDITFHVKRGEWLSIVGHNGSGKSTTVRLIDGLLEAESGEIVIDGQRLTEENVWNIRRQIGMVFQNPDNQFVGATVEDDVAFGLENQGLSRQEMKKRVEEALALVGMLDFKKREPARLSGGQKQRVAIAGVVALRPAILILDEATSMLDPEGRRELIGTVKGIRKDYDMTVISITHDLEEVAMSDRVLVMKKGEIESTSSPRELFSRNDLDQIGLDDPFANQLKKSLSQNGYDLPENYLTESELEDKLWELL</sequence>
<comment type="function">
    <text evidence="1">ATP-binding (A) component of a common energy-coupling factor (ECF) ABC-transporter complex. Unlike classic ABC transporters this ECF transporter provides the energy necessary to transport a number of different substrates.</text>
</comment>
<comment type="subunit">
    <text evidence="1">Forms a stable energy-coupling factor (ECF) transporter complex composed of 2 membrane-embedded substrate-binding proteins (S component), 2 ATP-binding proteins (A component) and 2 transmembrane proteins (T component).</text>
</comment>
<comment type="subcellular location">
    <subcellularLocation>
        <location evidence="1">Cell membrane</location>
        <topology evidence="1">Peripheral membrane protein</topology>
    </subcellularLocation>
</comment>
<comment type="similarity">
    <text evidence="1">Belongs to the ABC transporter superfamily. Energy-coupling factor EcfA family.</text>
</comment>
<accession>Q04HV7</accession>
<gene>
    <name evidence="1" type="primary">ecfA1</name>
    <name type="synonym">cbiO1</name>
    <name type="ordered locus">SPD_2048</name>
</gene>
<evidence type="ECO:0000255" key="1">
    <source>
        <dbReference type="HAMAP-Rule" id="MF_01710"/>
    </source>
</evidence>
<protein>
    <recommendedName>
        <fullName evidence="1">Energy-coupling factor transporter ATP-binding protein EcfA1</fullName>
        <shortName evidence="1">ECF transporter A component EcfA1</shortName>
        <ecNumber evidence="1">7.-.-.-</ecNumber>
    </recommendedName>
</protein>
<reference key="1">
    <citation type="journal article" date="2007" name="J. Bacteriol.">
        <title>Genome sequence of Avery's virulent serotype 2 strain D39 of Streptococcus pneumoniae and comparison with that of unencapsulated laboratory strain R6.</title>
        <authorList>
            <person name="Lanie J.A."/>
            <person name="Ng W.-L."/>
            <person name="Kazmierczak K.M."/>
            <person name="Andrzejewski T.M."/>
            <person name="Davidsen T.M."/>
            <person name="Wayne K.J."/>
            <person name="Tettelin H."/>
            <person name="Glass J.I."/>
            <person name="Winkler M.E."/>
        </authorList>
    </citation>
    <scope>NUCLEOTIDE SEQUENCE [LARGE SCALE GENOMIC DNA]</scope>
    <source>
        <strain>D39 / NCTC 7466</strain>
    </source>
</reference>
<proteinExistence type="inferred from homology"/>
<name>ECFA1_STRP2</name>
<keyword id="KW-0067">ATP-binding</keyword>
<keyword id="KW-1003">Cell membrane</keyword>
<keyword id="KW-0472">Membrane</keyword>
<keyword id="KW-0547">Nucleotide-binding</keyword>
<keyword id="KW-1185">Reference proteome</keyword>
<keyword id="KW-1278">Translocase</keyword>
<keyword id="KW-0813">Transport</keyword>
<feature type="chain" id="PRO_0000287994" description="Energy-coupling factor transporter ATP-binding protein EcfA1">
    <location>
        <begin position="1"/>
        <end position="275"/>
    </location>
</feature>
<feature type="domain" description="ABC transporter" evidence="1">
    <location>
        <begin position="5"/>
        <end position="240"/>
    </location>
</feature>
<feature type="binding site" evidence="1">
    <location>
        <begin position="40"/>
        <end position="47"/>
    </location>
    <ligand>
        <name>ATP</name>
        <dbReference type="ChEBI" id="CHEBI:30616"/>
    </ligand>
</feature>
<dbReference type="EC" id="7.-.-.-" evidence="1"/>
<dbReference type="EMBL" id="CP000410">
    <property type="protein sequence ID" value="ABJ54283.1"/>
    <property type="molecule type" value="Genomic_DNA"/>
</dbReference>
<dbReference type="RefSeq" id="WP_000835715.1">
    <property type="nucleotide sequence ID" value="NZ_JAMLJR010000007.1"/>
</dbReference>
<dbReference type="SMR" id="Q04HV7"/>
<dbReference type="PaxDb" id="373153-SPD_2048"/>
<dbReference type="KEGG" id="spd:SPD_2048"/>
<dbReference type="eggNOG" id="COG1122">
    <property type="taxonomic scope" value="Bacteria"/>
</dbReference>
<dbReference type="HOGENOM" id="CLU_000604_1_22_9"/>
<dbReference type="BioCyc" id="SPNE373153:G1G6V-2198-MONOMER"/>
<dbReference type="Proteomes" id="UP000001452">
    <property type="component" value="Chromosome"/>
</dbReference>
<dbReference type="GO" id="GO:0043190">
    <property type="term" value="C:ATP-binding cassette (ABC) transporter complex"/>
    <property type="evidence" value="ECO:0007669"/>
    <property type="project" value="TreeGrafter"/>
</dbReference>
<dbReference type="GO" id="GO:0005524">
    <property type="term" value="F:ATP binding"/>
    <property type="evidence" value="ECO:0007669"/>
    <property type="project" value="UniProtKB-KW"/>
</dbReference>
<dbReference type="GO" id="GO:0016887">
    <property type="term" value="F:ATP hydrolysis activity"/>
    <property type="evidence" value="ECO:0007669"/>
    <property type="project" value="InterPro"/>
</dbReference>
<dbReference type="GO" id="GO:0042626">
    <property type="term" value="F:ATPase-coupled transmembrane transporter activity"/>
    <property type="evidence" value="ECO:0007669"/>
    <property type="project" value="TreeGrafter"/>
</dbReference>
<dbReference type="CDD" id="cd03225">
    <property type="entry name" value="ABC_cobalt_CbiO_domain1"/>
    <property type="match status" value="1"/>
</dbReference>
<dbReference type="FunFam" id="3.40.50.300:FF:000224">
    <property type="entry name" value="Energy-coupling factor transporter ATP-binding protein EcfA"/>
    <property type="match status" value="1"/>
</dbReference>
<dbReference type="Gene3D" id="3.40.50.300">
    <property type="entry name" value="P-loop containing nucleotide triphosphate hydrolases"/>
    <property type="match status" value="1"/>
</dbReference>
<dbReference type="InterPro" id="IPR003593">
    <property type="entry name" value="AAA+_ATPase"/>
</dbReference>
<dbReference type="InterPro" id="IPR003439">
    <property type="entry name" value="ABC_transporter-like_ATP-bd"/>
</dbReference>
<dbReference type="InterPro" id="IPR017871">
    <property type="entry name" value="ABC_transporter-like_CS"/>
</dbReference>
<dbReference type="InterPro" id="IPR015856">
    <property type="entry name" value="ABC_transpr_CbiO/EcfA_su"/>
</dbReference>
<dbReference type="InterPro" id="IPR050095">
    <property type="entry name" value="ECF_ABC_transporter_ATP-bd"/>
</dbReference>
<dbReference type="InterPro" id="IPR030947">
    <property type="entry name" value="EcfA_1"/>
</dbReference>
<dbReference type="InterPro" id="IPR027417">
    <property type="entry name" value="P-loop_NTPase"/>
</dbReference>
<dbReference type="NCBIfam" id="TIGR04520">
    <property type="entry name" value="ECF_ATPase_1"/>
    <property type="match status" value="1"/>
</dbReference>
<dbReference type="NCBIfam" id="NF010156">
    <property type="entry name" value="PRK13635.1"/>
    <property type="match status" value="1"/>
</dbReference>
<dbReference type="NCBIfam" id="NF010167">
    <property type="entry name" value="PRK13648.1"/>
    <property type="match status" value="1"/>
</dbReference>
<dbReference type="PANTHER" id="PTHR43553:SF24">
    <property type="entry name" value="ENERGY-COUPLING FACTOR TRANSPORTER ATP-BINDING PROTEIN ECFA1"/>
    <property type="match status" value="1"/>
</dbReference>
<dbReference type="PANTHER" id="PTHR43553">
    <property type="entry name" value="HEAVY METAL TRANSPORTER"/>
    <property type="match status" value="1"/>
</dbReference>
<dbReference type="Pfam" id="PF00005">
    <property type="entry name" value="ABC_tran"/>
    <property type="match status" value="1"/>
</dbReference>
<dbReference type="SMART" id="SM00382">
    <property type="entry name" value="AAA"/>
    <property type="match status" value="1"/>
</dbReference>
<dbReference type="SUPFAM" id="SSF52540">
    <property type="entry name" value="P-loop containing nucleoside triphosphate hydrolases"/>
    <property type="match status" value="1"/>
</dbReference>
<dbReference type="PROSITE" id="PS00211">
    <property type="entry name" value="ABC_TRANSPORTER_1"/>
    <property type="match status" value="1"/>
</dbReference>
<dbReference type="PROSITE" id="PS50893">
    <property type="entry name" value="ABC_TRANSPORTER_2"/>
    <property type="match status" value="1"/>
</dbReference>
<dbReference type="PROSITE" id="PS51246">
    <property type="entry name" value="CBIO"/>
    <property type="match status" value="1"/>
</dbReference>